<protein>
    <recommendedName>
        <fullName evidence="1">5-methyltetrahydropteroyltriglutamate--homocysteine methyltransferase</fullName>
        <ecNumber evidence="1">2.1.1.14</ecNumber>
    </recommendedName>
    <alternativeName>
        <fullName evidence="1">Cobalamin-independent methionine synthase</fullName>
    </alternativeName>
    <alternativeName>
        <fullName evidence="1">Methionine synthase, vitamin-B12 independent isozyme</fullName>
    </alternativeName>
</protein>
<sequence length="757" mass="85888">MTTLHILGFPRVGAKRELKFAQERYWRKELAEQDLLDLAKALREKNWLHQAQADADFVTVGDFTFYDHILDLQVATGAIPARFGFDSQTLSLDQYFQLARGNKEQFAIEMTKWFDTNYHYLVPEFQKNTTFKANPTHYVNQIREAKAAGHQVKPVIVGPLTFLWLGKEKGEAFNRFDLLKQLVPIYFEILTSLAAEGVEWIQIDEPALALDLPQEWLAAYQDVYAQLAKVNAKLLLATYFGSVAEHADLLKALPVDGLHLDLVRAPEQLSAFEDYPKVLSAGVIDGRNIWRANLNRVLDVLEPLKAKFNQRLWIAPSCSLLHTPYDLAVETQLQQNNPELYRWLAFTLQKVAELQVLKQALNAGRSAVAEQLNDSQTAADARANSNVIHKAEVAQRLANLPTNADKRQSPFAERIKLQNKWLNLPLLPTTNIGSFPQTLEIRHARAAFKKGELSLADYEAAMKKEIEFVVRKQEELDLDVLVHGEAERNDMVEYFGELLDGFAFTKFGWVQSYGSRCVKPPVIYGDVTRPEPMTVRWSQYAQSLTDKVMKGMLTGPVTILQWSFVRNDIPRSTVCKQIGVALSDEVLDLEKAGIKVIQIDEPAIREGLPLKRADWDAYLQWAGEAFRLSYMGVKDDTQIHTHMCYSEFNDILPAIAGLDADVITIETSRSDMELLTAFADFKYPNDIGPGVYDIHSPRVPTAGEIEHLLRKALKVIPKERLWVNPDCGLKTRGWKETIEQLQVMVEVTKKLRAELAE</sequence>
<accession>B3GY43</accession>
<organism>
    <name type="scientific">Actinobacillus pleuropneumoniae serotype 7 (strain AP76)</name>
    <dbReference type="NCBI Taxonomy" id="537457"/>
    <lineage>
        <taxon>Bacteria</taxon>
        <taxon>Pseudomonadati</taxon>
        <taxon>Pseudomonadota</taxon>
        <taxon>Gammaproteobacteria</taxon>
        <taxon>Pasteurellales</taxon>
        <taxon>Pasteurellaceae</taxon>
        <taxon>Actinobacillus</taxon>
    </lineage>
</organism>
<proteinExistence type="inferred from homology"/>
<gene>
    <name evidence="1" type="primary">metE</name>
    <name type="ordered locus">APP7_1214</name>
</gene>
<keyword id="KW-0028">Amino-acid biosynthesis</keyword>
<keyword id="KW-0479">Metal-binding</keyword>
<keyword id="KW-0486">Methionine biosynthesis</keyword>
<keyword id="KW-0489">Methyltransferase</keyword>
<keyword id="KW-0677">Repeat</keyword>
<keyword id="KW-0808">Transferase</keyword>
<keyword id="KW-0862">Zinc</keyword>
<name>METE_ACTP7</name>
<feature type="chain" id="PRO_1000097812" description="5-methyltetrahydropteroyltriglutamate--homocysteine methyltransferase">
    <location>
        <begin position="1"/>
        <end position="757"/>
    </location>
</feature>
<feature type="active site" description="Proton donor" evidence="1">
    <location>
        <position position="695"/>
    </location>
</feature>
<feature type="binding site" evidence="1">
    <location>
        <begin position="16"/>
        <end position="19"/>
    </location>
    <ligand>
        <name>5-methyltetrahydropteroyltri-L-glutamate</name>
        <dbReference type="ChEBI" id="CHEBI:58207"/>
    </ligand>
</feature>
<feature type="binding site" evidence="1">
    <location>
        <position position="112"/>
    </location>
    <ligand>
        <name>5-methyltetrahydropteroyltri-L-glutamate</name>
        <dbReference type="ChEBI" id="CHEBI:58207"/>
    </ligand>
</feature>
<feature type="binding site" evidence="1">
    <location>
        <begin position="432"/>
        <end position="434"/>
    </location>
    <ligand>
        <name>L-homocysteine</name>
        <dbReference type="ChEBI" id="CHEBI:58199"/>
    </ligand>
</feature>
<feature type="binding site" evidence="1">
    <location>
        <begin position="432"/>
        <end position="434"/>
    </location>
    <ligand>
        <name>L-methionine</name>
        <dbReference type="ChEBI" id="CHEBI:57844"/>
    </ligand>
</feature>
<feature type="binding site" evidence="1">
    <location>
        <position position="485"/>
    </location>
    <ligand>
        <name>L-homocysteine</name>
        <dbReference type="ChEBI" id="CHEBI:58199"/>
    </ligand>
</feature>
<feature type="binding site" evidence="1">
    <location>
        <position position="485"/>
    </location>
    <ligand>
        <name>L-methionine</name>
        <dbReference type="ChEBI" id="CHEBI:57844"/>
    </ligand>
</feature>
<feature type="binding site" evidence="1">
    <location>
        <begin position="516"/>
        <end position="517"/>
    </location>
    <ligand>
        <name>5-methyltetrahydropteroyltri-L-glutamate</name>
        <dbReference type="ChEBI" id="CHEBI:58207"/>
    </ligand>
</feature>
<feature type="binding site" evidence="1">
    <location>
        <position position="562"/>
    </location>
    <ligand>
        <name>5-methyltetrahydropteroyltri-L-glutamate</name>
        <dbReference type="ChEBI" id="CHEBI:58207"/>
    </ligand>
</feature>
<feature type="binding site" evidence="1">
    <location>
        <position position="600"/>
    </location>
    <ligand>
        <name>L-homocysteine</name>
        <dbReference type="ChEBI" id="CHEBI:58199"/>
    </ligand>
</feature>
<feature type="binding site" evidence="1">
    <location>
        <position position="600"/>
    </location>
    <ligand>
        <name>L-methionine</name>
        <dbReference type="ChEBI" id="CHEBI:57844"/>
    </ligand>
</feature>
<feature type="binding site" evidence="1">
    <location>
        <position position="606"/>
    </location>
    <ligand>
        <name>5-methyltetrahydropteroyltri-L-glutamate</name>
        <dbReference type="ChEBI" id="CHEBI:58207"/>
    </ligand>
</feature>
<feature type="binding site" evidence="1">
    <location>
        <position position="642"/>
    </location>
    <ligand>
        <name>Zn(2+)</name>
        <dbReference type="ChEBI" id="CHEBI:29105"/>
        <note>catalytic</note>
    </ligand>
</feature>
<feature type="binding site" evidence="1">
    <location>
        <position position="644"/>
    </location>
    <ligand>
        <name>Zn(2+)</name>
        <dbReference type="ChEBI" id="CHEBI:29105"/>
        <note>catalytic</note>
    </ligand>
</feature>
<feature type="binding site" evidence="1">
    <location>
        <position position="666"/>
    </location>
    <ligand>
        <name>Zn(2+)</name>
        <dbReference type="ChEBI" id="CHEBI:29105"/>
        <note>catalytic</note>
    </ligand>
</feature>
<feature type="binding site" evidence="1">
    <location>
        <position position="727"/>
    </location>
    <ligand>
        <name>Zn(2+)</name>
        <dbReference type="ChEBI" id="CHEBI:29105"/>
        <note>catalytic</note>
    </ligand>
</feature>
<comment type="function">
    <text evidence="1">Catalyzes the transfer of a methyl group from 5-methyltetrahydrofolate to homocysteine resulting in methionine formation.</text>
</comment>
<comment type="catalytic activity">
    <reaction evidence="1">
        <text>5-methyltetrahydropteroyltri-L-glutamate + L-homocysteine = tetrahydropteroyltri-L-glutamate + L-methionine</text>
        <dbReference type="Rhea" id="RHEA:21196"/>
        <dbReference type="ChEBI" id="CHEBI:57844"/>
        <dbReference type="ChEBI" id="CHEBI:58140"/>
        <dbReference type="ChEBI" id="CHEBI:58199"/>
        <dbReference type="ChEBI" id="CHEBI:58207"/>
        <dbReference type="EC" id="2.1.1.14"/>
    </reaction>
</comment>
<comment type="cofactor">
    <cofactor evidence="1">
        <name>Zn(2+)</name>
        <dbReference type="ChEBI" id="CHEBI:29105"/>
    </cofactor>
    <text evidence="1">Binds 1 zinc ion per subunit.</text>
</comment>
<comment type="pathway">
    <text evidence="1">Amino-acid biosynthesis; L-methionine biosynthesis via de novo pathway; L-methionine from L-homocysteine (MetE route): step 1/1.</text>
</comment>
<comment type="similarity">
    <text evidence="1">Belongs to the vitamin-B12 independent methionine synthase family.</text>
</comment>
<reference key="1">
    <citation type="submission" date="2008-06" db="EMBL/GenBank/DDBJ databases">
        <title>Genome and proteome analysis of A. pleuropneumoniae serotype 7.</title>
        <authorList>
            <person name="Linke B."/>
            <person name="Buettner F."/>
            <person name="Martinez-Arias R."/>
            <person name="Goesmann A."/>
            <person name="Baltes N."/>
            <person name="Tegetmeyer H."/>
            <person name="Singh M."/>
            <person name="Gerlach G.F."/>
        </authorList>
    </citation>
    <scope>NUCLEOTIDE SEQUENCE [LARGE SCALE GENOMIC DNA]</scope>
    <source>
        <strain>AP76</strain>
    </source>
</reference>
<evidence type="ECO:0000255" key="1">
    <source>
        <dbReference type="HAMAP-Rule" id="MF_00172"/>
    </source>
</evidence>
<dbReference type="EC" id="2.1.1.14" evidence="1"/>
<dbReference type="EMBL" id="CP001091">
    <property type="protein sequence ID" value="ACE61866.1"/>
    <property type="molecule type" value="Genomic_DNA"/>
</dbReference>
<dbReference type="RefSeq" id="WP_005615503.1">
    <property type="nucleotide sequence ID" value="NC_010939.1"/>
</dbReference>
<dbReference type="SMR" id="B3GY43"/>
<dbReference type="KEGG" id="apa:APP7_1214"/>
<dbReference type="HOGENOM" id="CLU_013175_0_0_6"/>
<dbReference type="UniPathway" id="UPA00051">
    <property type="reaction ID" value="UER00082"/>
</dbReference>
<dbReference type="Proteomes" id="UP000001226">
    <property type="component" value="Chromosome"/>
</dbReference>
<dbReference type="GO" id="GO:0003871">
    <property type="term" value="F:5-methyltetrahydropteroyltriglutamate-homocysteine S-methyltransferase activity"/>
    <property type="evidence" value="ECO:0007669"/>
    <property type="project" value="UniProtKB-UniRule"/>
</dbReference>
<dbReference type="GO" id="GO:0008270">
    <property type="term" value="F:zinc ion binding"/>
    <property type="evidence" value="ECO:0007669"/>
    <property type="project" value="InterPro"/>
</dbReference>
<dbReference type="GO" id="GO:0009086">
    <property type="term" value="P:methionine biosynthetic process"/>
    <property type="evidence" value="ECO:0007669"/>
    <property type="project" value="UniProtKB-UniRule"/>
</dbReference>
<dbReference type="GO" id="GO:0032259">
    <property type="term" value="P:methylation"/>
    <property type="evidence" value="ECO:0007669"/>
    <property type="project" value="UniProtKB-KW"/>
</dbReference>
<dbReference type="CDD" id="cd03311">
    <property type="entry name" value="CIMS_C_terminal_like"/>
    <property type="match status" value="1"/>
</dbReference>
<dbReference type="CDD" id="cd03312">
    <property type="entry name" value="CIMS_N_terminal_like"/>
    <property type="match status" value="1"/>
</dbReference>
<dbReference type="FunFam" id="3.20.20.210:FF:000002">
    <property type="entry name" value="5-methyltetrahydropteroyltriglutamate--homocysteine methyltransferase"/>
    <property type="match status" value="1"/>
</dbReference>
<dbReference type="Gene3D" id="3.20.20.210">
    <property type="match status" value="2"/>
</dbReference>
<dbReference type="HAMAP" id="MF_00172">
    <property type="entry name" value="Meth_synth"/>
    <property type="match status" value="1"/>
</dbReference>
<dbReference type="InterPro" id="IPR013215">
    <property type="entry name" value="Cbl-indep_Met_Synth_N"/>
</dbReference>
<dbReference type="InterPro" id="IPR006276">
    <property type="entry name" value="Cobalamin-indep_Met_synthase"/>
</dbReference>
<dbReference type="InterPro" id="IPR002629">
    <property type="entry name" value="Met_Synth_C/arc"/>
</dbReference>
<dbReference type="InterPro" id="IPR038071">
    <property type="entry name" value="UROD/MetE-like_sf"/>
</dbReference>
<dbReference type="NCBIfam" id="TIGR01371">
    <property type="entry name" value="met_syn_B12ind"/>
    <property type="match status" value="1"/>
</dbReference>
<dbReference type="NCBIfam" id="NF003556">
    <property type="entry name" value="PRK05222.1"/>
    <property type="match status" value="1"/>
</dbReference>
<dbReference type="PANTHER" id="PTHR30519">
    <property type="entry name" value="5-METHYLTETRAHYDROPTEROYLTRIGLUTAMATE--HOMOCYSTEINE METHYLTRANSFERASE"/>
    <property type="match status" value="1"/>
</dbReference>
<dbReference type="Pfam" id="PF08267">
    <property type="entry name" value="Meth_synt_1"/>
    <property type="match status" value="1"/>
</dbReference>
<dbReference type="Pfam" id="PF01717">
    <property type="entry name" value="Meth_synt_2"/>
    <property type="match status" value="1"/>
</dbReference>
<dbReference type="PIRSF" id="PIRSF000382">
    <property type="entry name" value="MeTrfase_B12_ind"/>
    <property type="match status" value="1"/>
</dbReference>
<dbReference type="SUPFAM" id="SSF51726">
    <property type="entry name" value="UROD/MetE-like"/>
    <property type="match status" value="2"/>
</dbReference>